<sequence>MGSNIVIYFSIIVIVTLNVNGVPASDLFKSVSQYHIPRSKVINKETVTKPLQFQRAICRLLQKLGEETFARLSQSELEAKQLDLIKTCYQANSFGDNENQGHMQRMDRNYYGWMDFGKRAIEDVDYEY</sequence>
<accession>P16240</accession>
<proteinExistence type="evidence at protein level"/>
<reference key="1">
    <citation type="journal article" date="1993" name="FEBS Lett.">
        <title>cDNA deduced procionin. Structure and expression in protochordates resemble that of procholecystokinin in mammals.</title>
        <authorList>
            <person name="Monstein H.J."/>
            <person name="Thorup J.U."/>
            <person name="Folkesson R."/>
            <person name="Johnsen A.H."/>
            <person name="Rehfeld J.F."/>
        </authorList>
    </citation>
    <scope>NUCLEOTIDE SEQUENCE [MRNA]</scope>
</reference>
<reference key="2">
    <citation type="journal article" date="1990" name="J. Biol. Chem.">
        <title>Cionin: a disulfotyrosyl hybrid of cholecystokinin and gastrin from the neural ganglion of the protochordate Ciona intestinalis.</title>
        <authorList>
            <person name="Johnsen A.H."/>
            <person name="Rehfeld J.F."/>
        </authorList>
    </citation>
    <scope>PROTEIN SEQUENCE OF 109-116</scope>
    <scope>SULFATION AT TYR-110 AND TYR-111</scope>
    <scope>AMIDATION AT PHE-116</scope>
    <source>
        <tissue>Neural ganglion</tissue>
    </source>
</reference>
<keyword id="KW-0027">Amidation</keyword>
<keyword id="KW-0165">Cleavage on pair of basic residues</keyword>
<keyword id="KW-0903">Direct protein sequencing</keyword>
<keyword id="KW-0372">Hormone</keyword>
<keyword id="KW-0527">Neuropeptide</keyword>
<keyword id="KW-1185">Reference proteome</keyword>
<keyword id="KW-0964">Secreted</keyword>
<keyword id="KW-0732">Signal</keyword>
<keyword id="KW-0765">Sulfation</keyword>
<dbReference type="EMBL" id="X69130">
    <property type="protein sequence ID" value="CAA48884.1"/>
    <property type="molecule type" value="mRNA"/>
</dbReference>
<dbReference type="PIR" id="S36901">
    <property type="entry name" value="S36901"/>
</dbReference>
<dbReference type="RefSeq" id="NP_001027711.1">
    <property type="nucleotide sequence ID" value="NM_001032539.1"/>
</dbReference>
<dbReference type="GeneID" id="445737"/>
<dbReference type="InParanoid" id="P16240"/>
<dbReference type="Proteomes" id="UP000008144">
    <property type="component" value="Unplaced"/>
</dbReference>
<dbReference type="GO" id="GO:0005576">
    <property type="term" value="C:extracellular region"/>
    <property type="evidence" value="ECO:0007669"/>
    <property type="project" value="UniProtKB-SubCell"/>
</dbReference>
<dbReference type="GO" id="GO:0005179">
    <property type="term" value="F:hormone activity"/>
    <property type="evidence" value="ECO:0007669"/>
    <property type="project" value="UniProtKB-KW"/>
</dbReference>
<dbReference type="GO" id="GO:0007218">
    <property type="term" value="P:neuropeptide signaling pathway"/>
    <property type="evidence" value="ECO:0007669"/>
    <property type="project" value="UniProtKB-KW"/>
</dbReference>
<dbReference type="InterPro" id="IPR039236">
    <property type="entry name" value="GAST"/>
</dbReference>
<dbReference type="InterPro" id="IPR001651">
    <property type="entry name" value="Gastrin/CCK"/>
</dbReference>
<dbReference type="InterPro" id="IPR013152">
    <property type="entry name" value="Gastrin/cholecystokinin_CS"/>
</dbReference>
<dbReference type="PANTHER" id="PTHR19309">
    <property type="entry name" value="GASTRIN"/>
    <property type="match status" value="1"/>
</dbReference>
<dbReference type="PANTHER" id="PTHR19309:SF0">
    <property type="entry name" value="GASTRIN"/>
    <property type="match status" value="1"/>
</dbReference>
<dbReference type="Pfam" id="PF00918">
    <property type="entry name" value="Gastrin"/>
    <property type="match status" value="1"/>
</dbReference>
<dbReference type="PROSITE" id="PS00259">
    <property type="entry name" value="GASTRIN"/>
    <property type="match status" value="1"/>
</dbReference>
<evidence type="ECO:0000255" key="1"/>
<evidence type="ECO:0000269" key="2">
    <source>
    </source>
</evidence>
<evidence type="ECO:0000305" key="3"/>
<protein>
    <recommendedName>
        <fullName>Cionin</fullName>
    </recommendedName>
</protein>
<feature type="signal peptide" evidence="1">
    <location>
        <begin position="1"/>
        <end position="22"/>
    </location>
</feature>
<feature type="propeptide" id="PRO_0000010671" evidence="2">
    <location>
        <begin position="23"/>
        <end position="108"/>
    </location>
</feature>
<feature type="peptide" id="PRO_0000010672" description="Cionin">
    <location>
        <begin position="109"/>
        <end position="116"/>
    </location>
</feature>
<feature type="propeptide" id="PRO_0000010673">
    <location>
        <begin position="120"/>
        <end position="128"/>
    </location>
</feature>
<feature type="modified residue" description="Sulfotyrosine" evidence="2">
    <location>
        <position position="110"/>
    </location>
</feature>
<feature type="modified residue" description="Sulfotyrosine" evidence="2">
    <location>
        <position position="111"/>
    </location>
</feature>
<feature type="modified residue" description="Phenylalanine amide" evidence="2">
    <location>
        <position position="116"/>
    </location>
</feature>
<comment type="subcellular location">
    <subcellularLocation>
        <location>Secreted</location>
    </subcellularLocation>
</comment>
<comment type="tissue specificity">
    <text>Expressed in both the gut and the neural ganglion.</text>
</comment>
<comment type="similarity">
    <text evidence="3">Belongs to the gastrin/cholecystokinin family.</text>
</comment>
<organism>
    <name type="scientific">Ciona intestinalis</name>
    <name type="common">Transparent sea squirt</name>
    <name type="synonym">Ascidia intestinalis</name>
    <dbReference type="NCBI Taxonomy" id="7719"/>
    <lineage>
        <taxon>Eukaryota</taxon>
        <taxon>Metazoa</taxon>
        <taxon>Chordata</taxon>
        <taxon>Tunicata</taxon>
        <taxon>Ascidiacea</taxon>
        <taxon>Phlebobranchia</taxon>
        <taxon>Cionidae</taxon>
        <taxon>Ciona</taxon>
    </lineage>
</organism>
<name>CION_CIOIN</name>